<sequence>MKLIILEHYSQASEWAAKYIRNRIIQFNPGPDKYFTLGLPTGSTPLGCYQKLIEYYKNGDLSFQYVKTFNMDEYVGLPRDHPESYHSFMWNNFFKHIDIHPENTHILDGNAADLQAECDAFEEKIQAAGGIELFVGGIGPDGHIAFNEPGSSLVSRTRVKTLAMDTILANARFFDGDLAKVPTMALTVGVGTVMDAKEVMILITGAHKAFALYKAIEEGVNHMWTVSAFQQHPRTVFVCDEDATLELKVKTVKYFKGLMLVHNKLVDPLYSIKEKEIQKSQSAKKPYSD</sequence>
<accession>O88958</accession>
<accession>Q91WJ4</accession>
<accession>Q9R188</accession>
<feature type="chain" id="PRO_0000160124" description="Glucosamine-6-phosphate deaminase 1">
    <location>
        <begin position="1"/>
        <end position="289"/>
    </location>
</feature>
<feature type="active site" description="Proton acceptor; for enolization step" evidence="1">
    <location>
        <position position="72"/>
    </location>
</feature>
<feature type="active site" description="For ring-opening step" evidence="1">
    <location>
        <position position="141"/>
    </location>
</feature>
<feature type="active site" description="Proton acceptor; for ring-opening step" evidence="1">
    <location>
        <position position="143"/>
    </location>
</feature>
<feature type="active site" description="For ring-opening step" evidence="1">
    <location>
        <position position="148"/>
    </location>
</feature>
<feature type="modified residue" description="Phosphothreonine" evidence="8">
    <location>
        <position position="161"/>
    </location>
</feature>
<feature type="sequence conflict" description="In Ref. 1; AAC36739." evidence="5" ref="1">
    <original>S</original>
    <variation>F</variation>
    <location>
        <position position="87"/>
    </location>
</feature>
<feature type="sequence conflict" description="In Ref. 1; AAC36739." evidence="5" ref="1">
    <original>N</original>
    <variation>D</variation>
    <location>
        <position position="91"/>
    </location>
</feature>
<feature type="sequence conflict" description="In Ref. 1; AAC36739." evidence="5" ref="1">
    <original>A</original>
    <variation>G</variation>
    <location>
        <position position="171"/>
    </location>
</feature>
<comment type="function">
    <text evidence="2 3">Catalyzes the reversible conversion of alpha-D-glucosamine 6-phosphate (GlcN-6P) into beta-D-fructose 6-phosphate (Fru-6P) and ammonium ion, a regulatory reaction step in de novo uridine diphosphate-N-acetyl-alpha-D-glucosamine (UDP-GlcNAc) biosynthesis via hexosamine pathway. Deamination is coupled to aldo-keto isomerization mediating the metabolic flux from UDP-GlcNAc toward Fru-6P. At high ammonium level can drive amination and isomerization of Fru-6P toward hexosamines and UDP-GlcNAc synthesis (By similarity). Has a role in fine tuning the metabolic fluctuations of cytosolic UDP-GlcNAc and their effects on hyaluronan synthesis that occur during tissue remodeling (By similarity). Seems to trigger calcium oscillations in mammalian eggs. These oscillations serve as the essential trigger for egg activation and early development of the embryo (By similarity).</text>
</comment>
<comment type="catalytic activity">
    <reaction evidence="2">
        <text>alpha-D-glucosamine 6-phosphate + H2O = beta-D-fructose 6-phosphate + NH4(+)</text>
        <dbReference type="Rhea" id="RHEA:12172"/>
        <dbReference type="ChEBI" id="CHEBI:15377"/>
        <dbReference type="ChEBI" id="CHEBI:28938"/>
        <dbReference type="ChEBI" id="CHEBI:57634"/>
        <dbReference type="ChEBI" id="CHEBI:75989"/>
        <dbReference type="EC" id="3.5.99.6"/>
    </reaction>
    <physiologicalReaction direction="left-to-right" evidence="2">
        <dbReference type="Rhea" id="RHEA:12173"/>
    </physiologicalReaction>
    <physiologicalReaction direction="right-to-left" evidence="2">
        <dbReference type="Rhea" id="RHEA:12174"/>
    </physiologicalReaction>
</comment>
<comment type="activity regulation">
    <text evidence="2">Allosterically activated by N-acetylglucosamine-6-phosphate (GlcNAc6P).</text>
</comment>
<comment type="pathway">
    <text evidence="2">Nucleotide-sugar biosynthesis; UDP-N-acetyl-alpha-D-glucosamine biosynthesis; alpha-D-glucosamine 6-phosphate from D-fructose 6-phosphate: step 1/1.</text>
</comment>
<comment type="subunit">
    <text evidence="2">Homohexamer.</text>
</comment>
<comment type="subcellular location">
    <subcellularLocation>
        <location evidence="4">Cytoplasm</location>
    </subcellularLocation>
</comment>
<comment type="tissue specificity">
    <text evidence="4">Widely expressed. Detected in brain, liver, kidney, muscle, ovary, testis, spermatids and spermatozoa. In spermatids, located close to the developing acrosome vesicle. In spermatozoa, found close to the acrosomal region.</text>
</comment>
<comment type="similarity">
    <text evidence="5">Belongs to the glucosamine/galactosamine-6-phosphate isomerase family.</text>
</comment>
<dbReference type="EC" id="3.5.99.6" evidence="2"/>
<dbReference type="EMBL" id="AF088903">
    <property type="protein sequence ID" value="AAC36739.1"/>
    <property type="molecule type" value="mRNA"/>
</dbReference>
<dbReference type="EMBL" id="AF160355">
    <property type="protein sequence ID" value="AAD42233.1"/>
    <property type="molecule type" value="mRNA"/>
</dbReference>
<dbReference type="EMBL" id="AC134576">
    <property type="status" value="NOT_ANNOTATED_CDS"/>
    <property type="molecule type" value="Genomic_DNA"/>
</dbReference>
<dbReference type="EMBL" id="AC152450">
    <property type="status" value="NOT_ANNOTATED_CDS"/>
    <property type="molecule type" value="Genomic_DNA"/>
</dbReference>
<dbReference type="EMBL" id="CH466528">
    <property type="protein sequence ID" value="EDL10078.1"/>
    <property type="molecule type" value="Genomic_DNA"/>
</dbReference>
<dbReference type="EMBL" id="BC014800">
    <property type="protein sequence ID" value="AAH14800.1"/>
    <property type="molecule type" value="mRNA"/>
</dbReference>
<dbReference type="CCDS" id="CCDS29201.1"/>
<dbReference type="RefSeq" id="NP_036067.2">
    <property type="nucleotide sequence ID" value="NM_011937.2"/>
</dbReference>
<dbReference type="SMR" id="O88958"/>
<dbReference type="BioGRID" id="204942">
    <property type="interactions" value="12"/>
</dbReference>
<dbReference type="FunCoup" id="O88958">
    <property type="interactions" value="1763"/>
</dbReference>
<dbReference type="STRING" id="10090.ENSMUSP00000069081"/>
<dbReference type="GlyGen" id="O88958">
    <property type="glycosylation" value="1 site, 1 O-linked glycan (1 site)"/>
</dbReference>
<dbReference type="iPTMnet" id="O88958"/>
<dbReference type="PhosphoSitePlus" id="O88958"/>
<dbReference type="SwissPalm" id="O88958"/>
<dbReference type="jPOST" id="O88958"/>
<dbReference type="PaxDb" id="10090-ENSMUSP00000069081"/>
<dbReference type="PeptideAtlas" id="O88958"/>
<dbReference type="ProteomicsDB" id="271008"/>
<dbReference type="Pumba" id="O88958"/>
<dbReference type="Antibodypedia" id="606">
    <property type="antibodies" value="251 antibodies from 32 providers"/>
</dbReference>
<dbReference type="DNASU" id="26384"/>
<dbReference type="Ensembl" id="ENSMUST00000063814.15">
    <property type="protein sequence ID" value="ENSMUSP00000069081.9"/>
    <property type="gene ID" value="ENSMUSG00000052102.16"/>
</dbReference>
<dbReference type="GeneID" id="26384"/>
<dbReference type="KEGG" id="mmu:26384"/>
<dbReference type="UCSC" id="uc008esi.2">
    <property type="organism name" value="mouse"/>
</dbReference>
<dbReference type="AGR" id="MGI:1347054"/>
<dbReference type="CTD" id="10007"/>
<dbReference type="MGI" id="MGI:1347054">
    <property type="gene designation" value="Gnpda1"/>
</dbReference>
<dbReference type="VEuPathDB" id="HostDB:ENSMUSG00000052102"/>
<dbReference type="eggNOG" id="KOG3148">
    <property type="taxonomic scope" value="Eukaryota"/>
</dbReference>
<dbReference type="GeneTree" id="ENSGT00390000014316"/>
<dbReference type="HOGENOM" id="CLU_049611_0_1_1"/>
<dbReference type="InParanoid" id="O88958"/>
<dbReference type="OMA" id="INHMWTL"/>
<dbReference type="OrthoDB" id="7663298at2759"/>
<dbReference type="PhylomeDB" id="O88958"/>
<dbReference type="TreeFam" id="TF300841"/>
<dbReference type="Reactome" id="R-MMU-70171">
    <property type="pathway name" value="Glycolysis"/>
</dbReference>
<dbReference type="UniPathway" id="UPA00113">
    <property type="reaction ID" value="UER00528"/>
</dbReference>
<dbReference type="BioGRID-ORCS" id="26384">
    <property type="hits" value="1 hit in 75 CRISPR screens"/>
</dbReference>
<dbReference type="ChiTaRS" id="Gnpda1">
    <property type="organism name" value="mouse"/>
</dbReference>
<dbReference type="PRO" id="PR:O88958"/>
<dbReference type="Proteomes" id="UP000000589">
    <property type="component" value="Chromosome 18"/>
</dbReference>
<dbReference type="RNAct" id="O88958">
    <property type="molecule type" value="protein"/>
</dbReference>
<dbReference type="Bgee" id="ENSMUSG00000052102">
    <property type="expression patterns" value="Expressed in yolk sac and 65 other cell types or tissues"/>
</dbReference>
<dbReference type="ExpressionAtlas" id="O88958">
    <property type="expression patterns" value="baseline and differential"/>
</dbReference>
<dbReference type="GO" id="GO:0005737">
    <property type="term" value="C:cytoplasm"/>
    <property type="evidence" value="ECO:0000314"/>
    <property type="project" value="UniProtKB"/>
</dbReference>
<dbReference type="GO" id="GO:0004342">
    <property type="term" value="F:glucosamine-6-phosphate deaminase activity"/>
    <property type="evidence" value="ECO:0000250"/>
    <property type="project" value="UniProtKB"/>
</dbReference>
<dbReference type="GO" id="GO:0016853">
    <property type="term" value="F:isomerase activity"/>
    <property type="evidence" value="ECO:0007669"/>
    <property type="project" value="UniProtKB-KW"/>
</dbReference>
<dbReference type="GO" id="GO:0007340">
    <property type="term" value="P:acrosome reaction"/>
    <property type="evidence" value="ECO:0000304"/>
    <property type="project" value="MGI"/>
</dbReference>
<dbReference type="GO" id="GO:0006002">
    <property type="term" value="P:fructose 6-phosphate metabolic process"/>
    <property type="evidence" value="ECO:0000266"/>
    <property type="project" value="MGI"/>
</dbReference>
<dbReference type="GO" id="GO:0046370">
    <property type="term" value="P:fructose biosynthetic process"/>
    <property type="evidence" value="ECO:0000266"/>
    <property type="project" value="MGI"/>
</dbReference>
<dbReference type="GO" id="GO:0006091">
    <property type="term" value="P:generation of precursor metabolites and energy"/>
    <property type="evidence" value="ECO:0000250"/>
    <property type="project" value="UniProtKB"/>
</dbReference>
<dbReference type="GO" id="GO:0006043">
    <property type="term" value="P:glucosamine catabolic process"/>
    <property type="evidence" value="ECO:0000250"/>
    <property type="project" value="UniProtKB"/>
</dbReference>
<dbReference type="GO" id="GO:0006041">
    <property type="term" value="P:glucosamine metabolic process"/>
    <property type="evidence" value="ECO:0000266"/>
    <property type="project" value="MGI"/>
</dbReference>
<dbReference type="GO" id="GO:0006044">
    <property type="term" value="P:N-acetylglucosamine metabolic process"/>
    <property type="evidence" value="ECO:0007669"/>
    <property type="project" value="InterPro"/>
</dbReference>
<dbReference type="GO" id="GO:0006048">
    <property type="term" value="P:UDP-N-acetylglucosamine biosynthetic process"/>
    <property type="evidence" value="ECO:0000250"/>
    <property type="project" value="UniProtKB"/>
</dbReference>
<dbReference type="CDD" id="cd01399">
    <property type="entry name" value="GlcN6P_deaminase"/>
    <property type="match status" value="1"/>
</dbReference>
<dbReference type="FunFam" id="3.40.50.1360:FF:000004">
    <property type="entry name" value="Glucosamine-6-phosphate isomerase"/>
    <property type="match status" value="1"/>
</dbReference>
<dbReference type="Gene3D" id="3.40.50.1360">
    <property type="match status" value="1"/>
</dbReference>
<dbReference type="HAMAP" id="MF_01241">
    <property type="entry name" value="GlcN6P_deamin"/>
    <property type="match status" value="1"/>
</dbReference>
<dbReference type="InterPro" id="IPR006148">
    <property type="entry name" value="Glc/Gal-6P_isomerase"/>
</dbReference>
<dbReference type="InterPro" id="IPR004547">
    <property type="entry name" value="Glucosamine6P_isomerase"/>
</dbReference>
<dbReference type="InterPro" id="IPR018321">
    <property type="entry name" value="Glucosamine6P_isomerase_CS"/>
</dbReference>
<dbReference type="InterPro" id="IPR037171">
    <property type="entry name" value="NagB/RpiA_transferase-like"/>
</dbReference>
<dbReference type="NCBIfam" id="TIGR00502">
    <property type="entry name" value="nagB"/>
    <property type="match status" value="1"/>
</dbReference>
<dbReference type="PANTHER" id="PTHR11280">
    <property type="entry name" value="GLUCOSAMINE-6-PHOSPHATE ISOMERASE"/>
    <property type="match status" value="1"/>
</dbReference>
<dbReference type="PANTHER" id="PTHR11280:SF8">
    <property type="entry name" value="GLUCOSAMINE-6-PHOSPHATE ISOMERASE 1"/>
    <property type="match status" value="1"/>
</dbReference>
<dbReference type="Pfam" id="PF01182">
    <property type="entry name" value="Glucosamine_iso"/>
    <property type="match status" value="1"/>
</dbReference>
<dbReference type="SUPFAM" id="SSF100950">
    <property type="entry name" value="NagB/RpiA/CoA transferase-like"/>
    <property type="match status" value="1"/>
</dbReference>
<dbReference type="PROSITE" id="PS01161">
    <property type="entry name" value="GLC_GALNAC_ISOMERASE"/>
    <property type="match status" value="1"/>
</dbReference>
<protein>
    <recommendedName>
        <fullName evidence="6">Glucosamine-6-phosphate deaminase 1</fullName>
        <shortName>GlcN6P deaminase 1</shortName>
        <ecNumber evidence="2">3.5.99.6</ecNumber>
    </recommendedName>
    <alternativeName>
        <fullName evidence="6">Glucosamine-6-phosphate isomerase 1</fullName>
    </alternativeName>
    <alternativeName>
        <fullName evidence="6">Protein oscillin</fullName>
    </alternativeName>
</protein>
<reference key="1">
    <citation type="journal article" date="1999" name="FEBS Lett.">
        <title>Characterization of testicular mouse glucosamine 6-phosphate deaminase (GNPDA).</title>
        <authorList>
            <person name="Montag M."/>
            <person name="van der Ven K."/>
            <person name="Doerbecker C."/>
            <person name="van der Ven H."/>
        </authorList>
    </citation>
    <scope>NUCLEOTIDE SEQUENCE [MRNA]</scope>
    <scope>SUBCELLULAR LOCATION</scope>
    <scope>TISSUE SPECIFICITY</scope>
    <source>
        <tissue>Testis</tissue>
    </source>
</reference>
<reference key="2">
    <citation type="journal article" date="2000" name="Mol. Reprod. Dev.">
        <title>Cloning, sequencing, and expression analysis of mouse glucosamine-6-phosphate deaminase (GNPDA/oscillin).</title>
        <authorList>
            <person name="Amireault P."/>
            <person name="Dube F."/>
        </authorList>
    </citation>
    <scope>NUCLEOTIDE SEQUENCE [MRNA]</scope>
    <source>
        <tissue>Testis</tissue>
    </source>
</reference>
<reference key="3">
    <citation type="journal article" date="2009" name="PLoS Biol.">
        <title>Lineage-specific biology revealed by a finished genome assembly of the mouse.</title>
        <authorList>
            <person name="Church D.M."/>
            <person name="Goodstadt L."/>
            <person name="Hillier L.W."/>
            <person name="Zody M.C."/>
            <person name="Goldstein S."/>
            <person name="She X."/>
            <person name="Bult C.J."/>
            <person name="Agarwala R."/>
            <person name="Cherry J.L."/>
            <person name="DiCuccio M."/>
            <person name="Hlavina W."/>
            <person name="Kapustin Y."/>
            <person name="Meric P."/>
            <person name="Maglott D."/>
            <person name="Birtle Z."/>
            <person name="Marques A.C."/>
            <person name="Graves T."/>
            <person name="Zhou S."/>
            <person name="Teague B."/>
            <person name="Potamousis K."/>
            <person name="Churas C."/>
            <person name="Place M."/>
            <person name="Herschleb J."/>
            <person name="Runnheim R."/>
            <person name="Forrest D."/>
            <person name="Amos-Landgraf J."/>
            <person name="Schwartz D.C."/>
            <person name="Cheng Z."/>
            <person name="Lindblad-Toh K."/>
            <person name="Eichler E.E."/>
            <person name="Ponting C.P."/>
        </authorList>
    </citation>
    <scope>NUCLEOTIDE SEQUENCE [LARGE SCALE GENOMIC DNA]</scope>
    <source>
        <strain>C57BL/6J</strain>
    </source>
</reference>
<reference key="4">
    <citation type="submission" date="2005-07" db="EMBL/GenBank/DDBJ databases">
        <authorList>
            <person name="Mural R.J."/>
            <person name="Adams M.D."/>
            <person name="Myers E.W."/>
            <person name="Smith H.O."/>
            <person name="Venter J.C."/>
        </authorList>
    </citation>
    <scope>NUCLEOTIDE SEQUENCE [LARGE SCALE GENOMIC DNA]</scope>
</reference>
<reference key="5">
    <citation type="journal article" date="2004" name="Genome Res.">
        <title>The status, quality, and expansion of the NIH full-length cDNA project: the Mammalian Gene Collection (MGC).</title>
        <authorList>
            <consortium name="The MGC Project Team"/>
        </authorList>
    </citation>
    <scope>NUCLEOTIDE SEQUENCE [LARGE SCALE MRNA]</scope>
    <source>
        <strain>FVB/N</strain>
        <tissue>Kidney</tissue>
    </source>
</reference>
<reference key="6">
    <citation type="journal article" date="2010" name="Cell">
        <title>A tissue-specific atlas of mouse protein phosphorylation and expression.</title>
        <authorList>
            <person name="Huttlin E.L."/>
            <person name="Jedrychowski M.P."/>
            <person name="Elias J.E."/>
            <person name="Goswami T."/>
            <person name="Rad R."/>
            <person name="Beausoleil S.A."/>
            <person name="Villen J."/>
            <person name="Haas W."/>
            <person name="Sowa M.E."/>
            <person name="Gygi S.P."/>
        </authorList>
    </citation>
    <scope>PHOSPHORYLATION [LARGE SCALE ANALYSIS] AT THR-161</scope>
    <scope>IDENTIFICATION BY MASS SPECTROMETRY [LARGE SCALE ANALYSIS]</scope>
    <source>
        <tissue>Brain</tissue>
        <tissue>Brown adipose tissue</tissue>
        <tissue>Heart</tissue>
        <tissue>Kidney</tissue>
        <tissue>Liver</tissue>
        <tissue>Lung</tissue>
        <tissue>Pancreas</tissue>
        <tissue>Spleen</tissue>
        <tissue>Testis</tissue>
    </source>
</reference>
<keyword id="KW-0119">Carbohydrate metabolism</keyword>
<keyword id="KW-0963">Cytoplasm</keyword>
<keyword id="KW-0378">Hydrolase</keyword>
<keyword id="KW-0413">Isomerase</keyword>
<keyword id="KW-0597">Phosphoprotein</keyword>
<keyword id="KW-1185">Reference proteome</keyword>
<name>GNPI1_MOUSE</name>
<proteinExistence type="evidence at protein level"/>
<evidence type="ECO:0000250" key="1"/>
<evidence type="ECO:0000250" key="2">
    <source>
        <dbReference type="UniProtKB" id="P46926"/>
    </source>
</evidence>
<evidence type="ECO:0000250" key="3">
    <source>
        <dbReference type="UniProtKB" id="Q64422"/>
    </source>
</evidence>
<evidence type="ECO:0000269" key="4">
    <source>
    </source>
</evidence>
<evidence type="ECO:0000305" key="5"/>
<evidence type="ECO:0000312" key="6">
    <source>
        <dbReference type="MGI" id="MGI:1347054"/>
    </source>
</evidence>
<evidence type="ECO:0000312" key="7">
    <source>
        <dbReference type="Proteomes" id="UP000000589"/>
    </source>
</evidence>
<evidence type="ECO:0007744" key="8">
    <source>
    </source>
</evidence>
<gene>
    <name evidence="6" type="primary">Gnpda1</name>
    <name evidence="6" type="synonym">Gnpi</name>
</gene>
<organism evidence="7">
    <name type="scientific">Mus musculus</name>
    <name type="common">Mouse</name>
    <dbReference type="NCBI Taxonomy" id="10090"/>
    <lineage>
        <taxon>Eukaryota</taxon>
        <taxon>Metazoa</taxon>
        <taxon>Chordata</taxon>
        <taxon>Craniata</taxon>
        <taxon>Vertebrata</taxon>
        <taxon>Euteleostomi</taxon>
        <taxon>Mammalia</taxon>
        <taxon>Eutheria</taxon>
        <taxon>Euarchontoglires</taxon>
        <taxon>Glires</taxon>
        <taxon>Rodentia</taxon>
        <taxon>Myomorpha</taxon>
        <taxon>Muroidea</taxon>
        <taxon>Muridae</taxon>
        <taxon>Murinae</taxon>
        <taxon>Mus</taxon>
        <taxon>Mus</taxon>
    </lineage>
</organism>